<name>LEU3_MYCBO</name>
<keyword id="KW-0028">Amino-acid biosynthesis</keyword>
<keyword id="KW-0100">Branched-chain amino acid biosynthesis</keyword>
<keyword id="KW-0963">Cytoplasm</keyword>
<keyword id="KW-0432">Leucine biosynthesis</keyword>
<keyword id="KW-0460">Magnesium</keyword>
<keyword id="KW-0464">Manganese</keyword>
<keyword id="KW-0479">Metal-binding</keyword>
<keyword id="KW-0520">NAD</keyword>
<keyword id="KW-0560">Oxidoreductase</keyword>
<keyword id="KW-1185">Reference proteome</keyword>
<evidence type="ECO:0000255" key="1">
    <source>
        <dbReference type="HAMAP-Rule" id="MF_01035"/>
    </source>
</evidence>
<evidence type="ECO:0000303" key="2">
    <source>
    </source>
</evidence>
<evidence type="ECO:0000305" key="3">
    <source>
    </source>
</evidence>
<comment type="function">
    <text evidence="1">Catalyzes the oxidation of 3-carboxy-2-hydroxy-4-methylpentanoate (3-isopropylmalate) to 3-carboxy-4-methyl-2-oxopentanoate. The product decarboxylates to 4-methyl-2 oxopentanoate.</text>
</comment>
<comment type="catalytic activity">
    <reaction evidence="1 3">
        <text>(2R,3S)-3-isopropylmalate + NAD(+) = 4-methyl-2-oxopentanoate + CO2 + NADH</text>
        <dbReference type="Rhea" id="RHEA:32271"/>
        <dbReference type="ChEBI" id="CHEBI:16526"/>
        <dbReference type="ChEBI" id="CHEBI:17865"/>
        <dbReference type="ChEBI" id="CHEBI:35121"/>
        <dbReference type="ChEBI" id="CHEBI:57540"/>
        <dbReference type="ChEBI" id="CHEBI:57945"/>
        <dbReference type="EC" id="1.1.1.85"/>
    </reaction>
</comment>
<comment type="cofactor">
    <cofactor evidence="1">
        <name>Mg(2+)</name>
        <dbReference type="ChEBI" id="CHEBI:18420"/>
    </cofactor>
    <cofactor evidence="1">
        <name>Mn(2+)</name>
        <dbReference type="ChEBI" id="CHEBI:29035"/>
    </cofactor>
    <text evidence="1">Binds 1 Mg(2+) or Mn(2+) ion per subunit.</text>
</comment>
<comment type="pathway">
    <text evidence="1">Amino-acid biosynthesis; L-leucine biosynthesis; L-leucine from 3-methyl-2-oxobutanoate: step 3/4.</text>
</comment>
<comment type="subunit">
    <text evidence="1">Homodimer.</text>
</comment>
<comment type="subcellular location">
    <subcellularLocation>
        <location evidence="1">Cytoplasm</location>
    </subcellularLocation>
</comment>
<comment type="similarity">
    <text evidence="1">Belongs to the isocitrate and isopropylmalate dehydrogenases family. LeuB type 2 subfamily.</text>
</comment>
<organism>
    <name type="scientific">Mycobacterium bovis (strain ATCC BAA-935 / AF2122/97)</name>
    <dbReference type="NCBI Taxonomy" id="233413"/>
    <lineage>
        <taxon>Bacteria</taxon>
        <taxon>Bacillati</taxon>
        <taxon>Actinomycetota</taxon>
        <taxon>Actinomycetes</taxon>
        <taxon>Mycobacteriales</taxon>
        <taxon>Mycobacteriaceae</taxon>
        <taxon>Mycobacterium</taxon>
        <taxon>Mycobacterium tuberculosis complex</taxon>
    </lineage>
</organism>
<proteinExistence type="inferred from homology"/>
<dbReference type="EC" id="1.1.1.85" evidence="1 3"/>
<dbReference type="EMBL" id="U78886">
    <property type="protein sequence ID" value="AAC45173.1"/>
    <property type="molecule type" value="Genomic_DNA"/>
</dbReference>
<dbReference type="EMBL" id="LT708304">
    <property type="protein sequence ID" value="SIU01643.1"/>
    <property type="molecule type" value="Genomic_DNA"/>
</dbReference>
<dbReference type="RefSeq" id="NP_856664.1">
    <property type="nucleotide sequence ID" value="NC_002945.3"/>
</dbReference>
<dbReference type="RefSeq" id="WP_003415144.1">
    <property type="nucleotide sequence ID" value="NC_002945.4"/>
</dbReference>
<dbReference type="SMR" id="P94929"/>
<dbReference type="KEGG" id="mbo:BQ2027_MB3019C"/>
<dbReference type="PATRIC" id="fig|233413.5.peg.3318"/>
<dbReference type="BRENDA" id="1.1.1.85">
    <property type="organism ID" value="3494"/>
</dbReference>
<dbReference type="UniPathway" id="UPA00048">
    <property type="reaction ID" value="UER00072"/>
</dbReference>
<dbReference type="Proteomes" id="UP000001419">
    <property type="component" value="Chromosome"/>
</dbReference>
<dbReference type="GO" id="GO:0005737">
    <property type="term" value="C:cytoplasm"/>
    <property type="evidence" value="ECO:0007669"/>
    <property type="project" value="UniProtKB-SubCell"/>
</dbReference>
<dbReference type="GO" id="GO:0003862">
    <property type="term" value="F:3-isopropylmalate dehydrogenase activity"/>
    <property type="evidence" value="ECO:0007669"/>
    <property type="project" value="UniProtKB-UniRule"/>
</dbReference>
<dbReference type="GO" id="GO:0000287">
    <property type="term" value="F:magnesium ion binding"/>
    <property type="evidence" value="ECO:0007669"/>
    <property type="project" value="InterPro"/>
</dbReference>
<dbReference type="GO" id="GO:0051287">
    <property type="term" value="F:NAD binding"/>
    <property type="evidence" value="ECO:0007669"/>
    <property type="project" value="InterPro"/>
</dbReference>
<dbReference type="GO" id="GO:0009098">
    <property type="term" value="P:L-leucine biosynthetic process"/>
    <property type="evidence" value="ECO:0007669"/>
    <property type="project" value="UniProtKB-UniRule"/>
</dbReference>
<dbReference type="FunFam" id="3.40.718.10:FF:000026">
    <property type="entry name" value="3-isopropylmalate dehydrogenase"/>
    <property type="match status" value="1"/>
</dbReference>
<dbReference type="Gene3D" id="3.40.718.10">
    <property type="entry name" value="Isopropylmalate Dehydrogenase"/>
    <property type="match status" value="1"/>
</dbReference>
<dbReference type="HAMAP" id="MF_01035">
    <property type="entry name" value="LeuB_type2"/>
    <property type="match status" value="1"/>
</dbReference>
<dbReference type="InterPro" id="IPR050501">
    <property type="entry name" value="ICDH/IPMDH"/>
</dbReference>
<dbReference type="InterPro" id="IPR019818">
    <property type="entry name" value="IsoCit/isopropylmalate_DH_CS"/>
</dbReference>
<dbReference type="InterPro" id="IPR024084">
    <property type="entry name" value="IsoPropMal-DH-like_dom"/>
</dbReference>
<dbReference type="InterPro" id="IPR023698">
    <property type="entry name" value="LeuB_actb"/>
</dbReference>
<dbReference type="NCBIfam" id="NF002898">
    <property type="entry name" value="PRK03437.1"/>
    <property type="match status" value="1"/>
</dbReference>
<dbReference type="PANTHER" id="PTHR43275">
    <property type="entry name" value="D-MALATE DEHYDROGENASE [DECARBOXYLATING]"/>
    <property type="match status" value="1"/>
</dbReference>
<dbReference type="PANTHER" id="PTHR43275:SF1">
    <property type="entry name" value="D-MALATE DEHYDROGENASE [DECARBOXYLATING]"/>
    <property type="match status" value="1"/>
</dbReference>
<dbReference type="Pfam" id="PF00180">
    <property type="entry name" value="Iso_dh"/>
    <property type="match status" value="1"/>
</dbReference>
<dbReference type="SMART" id="SM01329">
    <property type="entry name" value="Iso_dh"/>
    <property type="match status" value="1"/>
</dbReference>
<dbReference type="SUPFAM" id="SSF53659">
    <property type="entry name" value="Isocitrate/Isopropylmalate dehydrogenase-like"/>
    <property type="match status" value="1"/>
</dbReference>
<dbReference type="PROSITE" id="PS00470">
    <property type="entry name" value="IDH_IMDH"/>
    <property type="match status" value="1"/>
</dbReference>
<accession>P94929</accession>
<accession>A0A1R3Y2U0</accession>
<accession>X2BM37</accession>
<sequence>MKLAIIAGDGIGPEVTAEAVKVLDAVVPGVQKTSYDLGARRFHATGEVLPDSVVAELRNHDAILLGAIGDPSVPSGVLERGLLLRLRFELDHHINLRPARLYPGVASPLSGNPGIDFVVVREGTEGPYTGNGGAIRVGTPNEVATEVSVNTAFGVRRVVADAFERARRRRKHLTLVHKTNVLTLAGGLWLRTVDEVGECYPDVEVAYQHVDAATIHMITDPGRFDVIVTDNLFGDIITDLAAAVCGGIGLAASGNIDATRANPSMFEPVHGSAPDIAGQGIADPTAAIMSVALLLSHLGEHDAAARVDRAVEAHLATRGSERLATSDVGERIAAAL</sequence>
<reference key="1">
    <citation type="journal article" date="1997" name="Biochem. Mol. Biol. Int.">
        <title>Molecular cloning of the leuB genes from Mycobacterium bovis BCG and Mycobacterium tuberculosis.</title>
        <authorList>
            <person name="Han M.Y."/>
            <person name="Son M.Y."/>
            <person name="Lee S.H."/>
            <person name="Kim J.K."/>
            <person name="Huh J.S."/>
            <person name="Kim J.H."/>
            <person name="Choe I.S."/>
            <person name="Chung T.W."/>
            <person name="Choe Y.K."/>
        </authorList>
    </citation>
    <scope>NUCLEOTIDE SEQUENCE [GENOMIC DNA]</scope>
    <source>
        <strain>BCG</strain>
    </source>
</reference>
<reference key="2">
    <citation type="journal article" date="2003" name="Proc. Natl. Acad. Sci. U.S.A.">
        <title>The complete genome sequence of Mycobacterium bovis.</title>
        <authorList>
            <person name="Garnier T."/>
            <person name="Eiglmeier K."/>
            <person name="Camus J.-C."/>
            <person name="Medina N."/>
            <person name="Mansoor H."/>
            <person name="Pryor M."/>
            <person name="Duthoy S."/>
            <person name="Grondin S."/>
            <person name="Lacroix C."/>
            <person name="Monsempe C."/>
            <person name="Simon S."/>
            <person name="Harris B."/>
            <person name="Atkin R."/>
            <person name="Doggett J."/>
            <person name="Mayes R."/>
            <person name="Keating L."/>
            <person name="Wheeler P.R."/>
            <person name="Parkhill J."/>
            <person name="Barrell B.G."/>
            <person name="Cole S.T."/>
            <person name="Gordon S.V."/>
            <person name="Hewinson R.G."/>
        </authorList>
    </citation>
    <scope>NUCLEOTIDE SEQUENCE [LARGE SCALE GENOMIC DNA]</scope>
    <source>
        <strain>ATCC BAA-935 / AF2122/97</strain>
    </source>
</reference>
<reference key="3">
    <citation type="journal article" date="2017" name="Genome Announc.">
        <title>Updated reference genome sequence and annotation of Mycobacterium bovis AF2122/97.</title>
        <authorList>
            <person name="Malone K.M."/>
            <person name="Farrell D."/>
            <person name="Stuber T.P."/>
            <person name="Schubert O.T."/>
            <person name="Aebersold R."/>
            <person name="Robbe-Austerman S."/>
            <person name="Gordon S.V."/>
        </authorList>
    </citation>
    <scope>NUCLEOTIDE SEQUENCE [LARGE SCALE GENOMIC DNA]</scope>
    <scope>GENOME REANNOTATION</scope>
    <source>
        <strain>ATCC BAA-935 / AF2122/97</strain>
    </source>
</reference>
<protein>
    <recommendedName>
        <fullName evidence="1 2">3-isopropylmalate dehydrogenase</fullName>
        <ecNumber evidence="1 3">1.1.1.85</ecNumber>
    </recommendedName>
    <alternativeName>
        <fullName evidence="1">3-IPM-DH</fullName>
    </alternativeName>
    <alternativeName>
        <fullName evidence="1">Beta-IPM dehydrogenase</fullName>
        <shortName evidence="1">IMDH</shortName>
    </alternativeName>
</protein>
<feature type="chain" id="PRO_0000083800" description="3-isopropylmalate dehydrogenase">
    <location>
        <begin position="1"/>
        <end position="336"/>
    </location>
</feature>
<feature type="binding site" evidence="1">
    <location>
        <position position="87"/>
    </location>
    <ligand>
        <name>substrate</name>
    </ligand>
</feature>
<feature type="binding site" evidence="1">
    <location>
        <position position="97"/>
    </location>
    <ligand>
        <name>substrate</name>
    </ligand>
</feature>
<feature type="binding site" evidence="1">
    <location>
        <position position="121"/>
    </location>
    <ligand>
        <name>substrate</name>
    </ligand>
</feature>
<feature type="binding site" evidence="1">
    <location>
        <position position="211"/>
    </location>
    <ligand>
        <name>Mg(2+)</name>
        <dbReference type="ChEBI" id="CHEBI:18420"/>
    </ligand>
</feature>
<feature type="binding site" evidence="1">
    <location>
        <position position="211"/>
    </location>
    <ligand>
        <name>substrate</name>
    </ligand>
</feature>
<feature type="binding site" evidence="1">
    <location>
        <position position="235"/>
    </location>
    <ligand>
        <name>Mg(2+)</name>
        <dbReference type="ChEBI" id="CHEBI:18420"/>
    </ligand>
</feature>
<feature type="binding site" evidence="1">
    <location>
        <position position="239"/>
    </location>
    <ligand>
        <name>Mg(2+)</name>
        <dbReference type="ChEBI" id="CHEBI:18420"/>
    </ligand>
</feature>
<feature type="binding site" evidence="1">
    <location>
        <begin position="271"/>
        <end position="283"/>
    </location>
    <ligand>
        <name>NAD(+)</name>
        <dbReference type="ChEBI" id="CHEBI:57540"/>
    </ligand>
</feature>
<feature type="site" description="Important for catalysis" evidence="1">
    <location>
        <position position="128"/>
    </location>
</feature>
<feature type="site" description="Important for catalysis" evidence="1">
    <location>
        <position position="178"/>
    </location>
</feature>
<gene>
    <name evidence="2" type="primary">leuB</name>
    <name type="ordered locus">BQ2027_MB3019C</name>
</gene>